<dbReference type="EMBL" id="CP000103">
    <property type="protein sequence ID" value="ABB74093.1"/>
    <property type="molecule type" value="Genomic_DNA"/>
</dbReference>
<dbReference type="RefSeq" id="WP_011380142.1">
    <property type="nucleotide sequence ID" value="NC_007614.1"/>
</dbReference>
<dbReference type="SMR" id="Q2YAX8"/>
<dbReference type="STRING" id="323848.Nmul_A0786"/>
<dbReference type="KEGG" id="nmu:Nmul_A0786"/>
<dbReference type="eggNOG" id="COG0200">
    <property type="taxonomic scope" value="Bacteria"/>
</dbReference>
<dbReference type="HOGENOM" id="CLU_055188_4_2_4"/>
<dbReference type="OrthoDB" id="9810293at2"/>
<dbReference type="Proteomes" id="UP000002718">
    <property type="component" value="Chromosome"/>
</dbReference>
<dbReference type="GO" id="GO:0022625">
    <property type="term" value="C:cytosolic large ribosomal subunit"/>
    <property type="evidence" value="ECO:0007669"/>
    <property type="project" value="TreeGrafter"/>
</dbReference>
<dbReference type="GO" id="GO:0019843">
    <property type="term" value="F:rRNA binding"/>
    <property type="evidence" value="ECO:0007669"/>
    <property type="project" value="UniProtKB-UniRule"/>
</dbReference>
<dbReference type="GO" id="GO:0003735">
    <property type="term" value="F:structural constituent of ribosome"/>
    <property type="evidence" value="ECO:0007669"/>
    <property type="project" value="InterPro"/>
</dbReference>
<dbReference type="GO" id="GO:0006412">
    <property type="term" value="P:translation"/>
    <property type="evidence" value="ECO:0007669"/>
    <property type="project" value="UniProtKB-UniRule"/>
</dbReference>
<dbReference type="Gene3D" id="3.100.10.10">
    <property type="match status" value="1"/>
</dbReference>
<dbReference type="HAMAP" id="MF_01341">
    <property type="entry name" value="Ribosomal_uL15"/>
    <property type="match status" value="1"/>
</dbReference>
<dbReference type="InterPro" id="IPR030878">
    <property type="entry name" value="Ribosomal_uL15"/>
</dbReference>
<dbReference type="InterPro" id="IPR021131">
    <property type="entry name" value="Ribosomal_uL15/eL18"/>
</dbReference>
<dbReference type="InterPro" id="IPR036227">
    <property type="entry name" value="Ribosomal_uL15/eL18_sf"/>
</dbReference>
<dbReference type="InterPro" id="IPR005749">
    <property type="entry name" value="Ribosomal_uL15_bac-type"/>
</dbReference>
<dbReference type="InterPro" id="IPR001196">
    <property type="entry name" value="Ribosomal_uL15_CS"/>
</dbReference>
<dbReference type="NCBIfam" id="TIGR01071">
    <property type="entry name" value="rplO_bact"/>
    <property type="match status" value="1"/>
</dbReference>
<dbReference type="PANTHER" id="PTHR12934">
    <property type="entry name" value="50S RIBOSOMAL PROTEIN L15"/>
    <property type="match status" value="1"/>
</dbReference>
<dbReference type="PANTHER" id="PTHR12934:SF11">
    <property type="entry name" value="LARGE RIBOSOMAL SUBUNIT PROTEIN UL15M"/>
    <property type="match status" value="1"/>
</dbReference>
<dbReference type="Pfam" id="PF00828">
    <property type="entry name" value="Ribosomal_L27A"/>
    <property type="match status" value="1"/>
</dbReference>
<dbReference type="SUPFAM" id="SSF52080">
    <property type="entry name" value="Ribosomal proteins L15p and L18e"/>
    <property type="match status" value="1"/>
</dbReference>
<dbReference type="PROSITE" id="PS00475">
    <property type="entry name" value="RIBOSOMAL_L15"/>
    <property type="match status" value="1"/>
</dbReference>
<sequence length="143" mass="14884">MQLNSIKPAPGAKHPKRRVGRGIGSGLGKTAGRGHKGQKSRAGGFHKVGFEGGQMPLQRRLPKRGFVSPTKKNDAEVRLSALDRIPGDIIDILILKQAGLVSGSALNVKVILSGKIERAVKLQGIPVTKGAKAAIEAAGGSVE</sequence>
<accession>Q2YAX8</accession>
<reference key="1">
    <citation type="submission" date="2005-08" db="EMBL/GenBank/DDBJ databases">
        <title>Complete sequence of chromosome 1 of Nitrosospira multiformis ATCC 25196.</title>
        <authorList>
            <person name="Copeland A."/>
            <person name="Lucas S."/>
            <person name="Lapidus A."/>
            <person name="Barry K."/>
            <person name="Detter J.C."/>
            <person name="Glavina T."/>
            <person name="Hammon N."/>
            <person name="Israni S."/>
            <person name="Pitluck S."/>
            <person name="Chain P."/>
            <person name="Malfatti S."/>
            <person name="Shin M."/>
            <person name="Vergez L."/>
            <person name="Schmutz J."/>
            <person name="Larimer F."/>
            <person name="Land M."/>
            <person name="Hauser L."/>
            <person name="Kyrpides N."/>
            <person name="Lykidis A."/>
            <person name="Richardson P."/>
        </authorList>
    </citation>
    <scope>NUCLEOTIDE SEQUENCE [LARGE SCALE GENOMIC DNA]</scope>
    <source>
        <strain>ATCC 25196 / NCIMB 11849 / C 71</strain>
    </source>
</reference>
<keyword id="KW-1185">Reference proteome</keyword>
<keyword id="KW-0687">Ribonucleoprotein</keyword>
<keyword id="KW-0689">Ribosomal protein</keyword>
<keyword id="KW-0694">RNA-binding</keyword>
<keyword id="KW-0699">rRNA-binding</keyword>
<comment type="function">
    <text evidence="1">Binds to the 23S rRNA.</text>
</comment>
<comment type="subunit">
    <text evidence="1">Part of the 50S ribosomal subunit.</text>
</comment>
<comment type="similarity">
    <text evidence="1">Belongs to the universal ribosomal protein uL15 family.</text>
</comment>
<evidence type="ECO:0000255" key="1">
    <source>
        <dbReference type="HAMAP-Rule" id="MF_01341"/>
    </source>
</evidence>
<evidence type="ECO:0000256" key="2">
    <source>
        <dbReference type="SAM" id="MobiDB-lite"/>
    </source>
</evidence>
<evidence type="ECO:0000305" key="3"/>
<feature type="chain" id="PRO_0000251534" description="Large ribosomal subunit protein uL15">
    <location>
        <begin position="1"/>
        <end position="143"/>
    </location>
</feature>
<feature type="region of interest" description="Disordered" evidence="2">
    <location>
        <begin position="1"/>
        <end position="54"/>
    </location>
</feature>
<feature type="compositionally biased region" description="Gly residues" evidence="2">
    <location>
        <begin position="21"/>
        <end position="31"/>
    </location>
</feature>
<gene>
    <name evidence="1" type="primary">rplO</name>
    <name type="ordered locus">Nmul_A0786</name>
</gene>
<organism>
    <name type="scientific">Nitrosospira multiformis (strain ATCC 25196 / NCIMB 11849 / C 71)</name>
    <dbReference type="NCBI Taxonomy" id="323848"/>
    <lineage>
        <taxon>Bacteria</taxon>
        <taxon>Pseudomonadati</taxon>
        <taxon>Pseudomonadota</taxon>
        <taxon>Betaproteobacteria</taxon>
        <taxon>Nitrosomonadales</taxon>
        <taxon>Nitrosomonadaceae</taxon>
        <taxon>Nitrosospira</taxon>
    </lineage>
</organism>
<name>RL15_NITMU</name>
<proteinExistence type="inferred from homology"/>
<protein>
    <recommendedName>
        <fullName evidence="1">Large ribosomal subunit protein uL15</fullName>
    </recommendedName>
    <alternativeName>
        <fullName evidence="3">50S ribosomal protein L15</fullName>
    </alternativeName>
</protein>